<gene>
    <name type="primary">dps</name>
    <name type="synonym">dpsA</name>
    <name type="ordered locus">VNG_2443G</name>
    <name type="ORF">OE4427R</name>
</gene>
<evidence type="ECO:0000250" key="1"/>
<evidence type="ECO:0000255" key="2"/>
<evidence type="ECO:0000269" key="3">
    <source>
    </source>
</evidence>
<evidence type="ECO:0000305" key="4"/>
<evidence type="ECO:0007829" key="5">
    <source>
        <dbReference type="PDB" id="1TJO"/>
    </source>
</evidence>
<reference key="1">
    <citation type="unpublished observations" date="2001-11">
        <authorList>
            <person name="Oesterhelt D."/>
            <person name="Pfeiffer F."/>
        </authorList>
    </citation>
    <scope>NUCLEOTIDE SEQUENCE [GENOMIC DNA]</scope>
</reference>
<reference key="2">
    <citation type="journal article" date="2000" name="Proc. Natl. Acad. Sci. U.S.A.">
        <title>Genome sequence of Halobacterium species NRC-1.</title>
        <authorList>
            <person name="Ng W.V."/>
            <person name="Kennedy S.P."/>
            <person name="Mahairas G.G."/>
            <person name="Berquist B."/>
            <person name="Pan M."/>
            <person name="Shukla H.D."/>
            <person name="Lasky S.R."/>
            <person name="Baliga N.S."/>
            <person name="Thorsson V."/>
            <person name="Sbrogna J."/>
            <person name="Swartzell S."/>
            <person name="Weir D."/>
            <person name="Hall J."/>
            <person name="Dahl T.A."/>
            <person name="Welti R."/>
            <person name="Goo Y.A."/>
            <person name="Leithauser B."/>
            <person name="Keller K."/>
            <person name="Cruz R."/>
            <person name="Danson M.J."/>
            <person name="Hough D.W."/>
            <person name="Maddocks D.G."/>
            <person name="Jablonski P.E."/>
            <person name="Krebs M.P."/>
            <person name="Angevine C.M."/>
            <person name="Dale H."/>
            <person name="Isenbarger T.A."/>
            <person name="Peck R.F."/>
            <person name="Pohlschroder M."/>
            <person name="Spudich J.L."/>
            <person name="Jung K.-H."/>
            <person name="Alam M."/>
            <person name="Freitas T."/>
            <person name="Hou S."/>
            <person name="Daniels C.J."/>
            <person name="Dennis P.P."/>
            <person name="Omer A.D."/>
            <person name="Ebhardt H."/>
            <person name="Lowe T.M."/>
            <person name="Liang P."/>
            <person name="Riley M."/>
            <person name="Hood L."/>
            <person name="DasSarma S."/>
        </authorList>
    </citation>
    <scope>NUCLEOTIDE SEQUENCE [LARGE SCALE GENOMIC DNA]</scope>
    <source>
        <strain>ATCC 700922 / JCM 11081 / NRC-1</strain>
    </source>
</reference>
<reference key="3">
    <citation type="journal article" date="2002" name="Biochim. Biophys. Acta">
        <title>The DpsA-homologue of the archaeon Halobacterium salinarum is a ferritin.</title>
        <authorList>
            <person name="Reindel S."/>
            <person name="Anemueller S."/>
            <person name="Sawaryn A."/>
            <person name="Matzanke B.F."/>
        </authorList>
    </citation>
    <scope>PROTEIN SEQUENCE OF 23-37</scope>
    <scope>CIRCULAR DICHROISM ANALYSIS</scope>
    <scope>PARTIAL CHARACTERIZATION</scope>
    <source>
        <strain>ATCC 33171 / DSM 3754 / JCM 8978 / NCIMB 764 / NRC 34002</strain>
    </source>
</reference>
<reference key="4">
    <citation type="journal article" date="2004" name="Proc. Natl. Acad. Sci. U.S.A.">
        <title>Iron-oxo clusters biomineralizing on protein surfaces: structural analysis of Halobacterium salinarum DpsA in its low- and high-iron states.</title>
        <authorList>
            <person name="Zeth K."/>
            <person name="Offermann S."/>
            <person name="Essen L.-O."/>
            <person name="Oesterhelt D."/>
        </authorList>
    </citation>
    <scope>PROTEIN SEQUENCE OF N-TERMINUS</scope>
    <scope>X-RAY CRYSTALLOGRAPHY (1.6 ANGSTROMS) IN COMPLEX WITH IRON</scope>
    <scope>SUBUNIT</scope>
</reference>
<organism>
    <name type="scientific">Halobacterium salinarum (strain ATCC 700922 / JCM 11081 / NRC-1)</name>
    <name type="common">Halobacterium halobium</name>
    <dbReference type="NCBI Taxonomy" id="64091"/>
    <lineage>
        <taxon>Archaea</taxon>
        <taxon>Methanobacteriati</taxon>
        <taxon>Methanobacteriota</taxon>
        <taxon>Stenosarchaea group</taxon>
        <taxon>Halobacteria</taxon>
        <taxon>Halobacteriales</taxon>
        <taxon>Halobacteriaceae</taxon>
        <taxon>Halobacterium</taxon>
        <taxon>Halobacterium salinarum NRC-34001</taxon>
    </lineage>
</organism>
<accession>Q9HMP7</accession>
<dbReference type="EC" id="1.16.-.-"/>
<dbReference type="EMBL" id="AE004437">
    <property type="protein sequence ID" value="AAG20524.1"/>
    <property type="molecule type" value="Genomic_DNA"/>
</dbReference>
<dbReference type="PIR" id="H84394">
    <property type="entry name" value="H84394"/>
</dbReference>
<dbReference type="RefSeq" id="WP_010903826.1">
    <property type="nucleotide sequence ID" value="NC_002607.1"/>
</dbReference>
<dbReference type="PDB" id="1MOJ">
    <property type="method" value="X-ray"/>
    <property type="resolution" value="1.90 A"/>
    <property type="chains" value="A/B/C/D=1-182"/>
</dbReference>
<dbReference type="PDB" id="1TJO">
    <property type="method" value="X-ray"/>
    <property type="resolution" value="1.60 A"/>
    <property type="chains" value="A/B/C/D=1-182"/>
</dbReference>
<dbReference type="PDB" id="1TK6">
    <property type="method" value="X-ray"/>
    <property type="resolution" value="2.20 A"/>
    <property type="chains" value="A/B/C/D=1-182"/>
</dbReference>
<dbReference type="PDB" id="1TKO">
    <property type="method" value="X-ray"/>
    <property type="resolution" value="2.90 A"/>
    <property type="chains" value="A/B/C/D=1-182"/>
</dbReference>
<dbReference type="PDB" id="1TKP">
    <property type="method" value="X-ray"/>
    <property type="resolution" value="2.20 A"/>
    <property type="chains" value="A/B/C/D=1-182"/>
</dbReference>
<dbReference type="PDBsum" id="1MOJ"/>
<dbReference type="PDBsum" id="1TJO"/>
<dbReference type="PDBsum" id="1TK6"/>
<dbReference type="PDBsum" id="1TKO"/>
<dbReference type="PDBsum" id="1TKP"/>
<dbReference type="SMR" id="Q9HMP7"/>
<dbReference type="STRING" id="64091.VNG_2443G"/>
<dbReference type="PaxDb" id="64091-VNG_2443G"/>
<dbReference type="GeneID" id="89348452"/>
<dbReference type="KEGG" id="hal:VNG_2443G"/>
<dbReference type="PATRIC" id="fig|64091.14.peg.1892"/>
<dbReference type="HOGENOM" id="CLU_098183_0_1_2"/>
<dbReference type="InParanoid" id="Q9HMP7"/>
<dbReference type="OrthoDB" id="8265at2157"/>
<dbReference type="PhylomeDB" id="Q9HMP7"/>
<dbReference type="BRENDA" id="1.16.3.2">
    <property type="organism ID" value="2552"/>
</dbReference>
<dbReference type="EvolutionaryTrace" id="Q9HMP7"/>
<dbReference type="Proteomes" id="UP000000554">
    <property type="component" value="Chromosome"/>
</dbReference>
<dbReference type="GO" id="GO:0005737">
    <property type="term" value="C:cytoplasm"/>
    <property type="evidence" value="ECO:0007669"/>
    <property type="project" value="UniProtKB-SubCell"/>
</dbReference>
<dbReference type="GO" id="GO:0008199">
    <property type="term" value="F:ferric iron binding"/>
    <property type="evidence" value="ECO:0007669"/>
    <property type="project" value="InterPro"/>
</dbReference>
<dbReference type="GO" id="GO:0016491">
    <property type="term" value="F:oxidoreductase activity"/>
    <property type="evidence" value="ECO:0007669"/>
    <property type="project" value="UniProtKB-KW"/>
</dbReference>
<dbReference type="GO" id="GO:0006879">
    <property type="term" value="P:intracellular iron ion homeostasis"/>
    <property type="evidence" value="ECO:0007669"/>
    <property type="project" value="UniProtKB-KW"/>
</dbReference>
<dbReference type="CDD" id="cd01043">
    <property type="entry name" value="DPS"/>
    <property type="match status" value="1"/>
</dbReference>
<dbReference type="Gene3D" id="1.20.1260.10">
    <property type="match status" value="1"/>
</dbReference>
<dbReference type="InterPro" id="IPR054862">
    <property type="entry name" value="DNA_prot_starvation"/>
</dbReference>
<dbReference type="InterPro" id="IPR002177">
    <property type="entry name" value="DPS_DNA-bd"/>
</dbReference>
<dbReference type="InterPro" id="IPR012347">
    <property type="entry name" value="Ferritin-like"/>
</dbReference>
<dbReference type="InterPro" id="IPR009078">
    <property type="entry name" value="Ferritin-like_SF"/>
</dbReference>
<dbReference type="InterPro" id="IPR008331">
    <property type="entry name" value="Ferritin_DPS_dom"/>
</dbReference>
<dbReference type="NCBIfam" id="NF041388">
    <property type="entry name" value="DNAstvprot_Halo"/>
    <property type="match status" value="1"/>
</dbReference>
<dbReference type="PANTHER" id="PTHR42932">
    <property type="entry name" value="GENERAL STRESS PROTEIN 20U"/>
    <property type="match status" value="1"/>
</dbReference>
<dbReference type="PANTHER" id="PTHR42932:SF1">
    <property type="entry name" value="GENERAL STRESS PROTEIN 20U"/>
    <property type="match status" value="1"/>
</dbReference>
<dbReference type="Pfam" id="PF00210">
    <property type="entry name" value="Ferritin"/>
    <property type="match status" value="1"/>
</dbReference>
<dbReference type="PIRSF" id="PIRSF005900">
    <property type="entry name" value="Dps"/>
    <property type="match status" value="1"/>
</dbReference>
<dbReference type="PRINTS" id="PR01346">
    <property type="entry name" value="HELNAPAPROT"/>
</dbReference>
<dbReference type="SUPFAM" id="SSF47240">
    <property type="entry name" value="Ferritin-like"/>
    <property type="match status" value="1"/>
</dbReference>
<comment type="function">
    <text evidence="1">Protects DNA from oxidative damage by sequestering intracellular Fe(2+) ion and storing it in the form of Fe(3+) oxyhydroxide mineral. One hydrogen peroxide oxidizes two Fe(2+) ions, which prevents hydroxyl radical production by the Fenton reaction (By similarity).</text>
</comment>
<comment type="catalytic activity">
    <reaction>
        <text>2 Fe(2+) + H2O2 + 2 H(+) = 2 Fe(3+) + 2 H2O</text>
        <dbReference type="Rhea" id="RHEA:48712"/>
        <dbReference type="ChEBI" id="CHEBI:15377"/>
        <dbReference type="ChEBI" id="CHEBI:15378"/>
        <dbReference type="ChEBI" id="CHEBI:16240"/>
        <dbReference type="ChEBI" id="CHEBI:29033"/>
        <dbReference type="ChEBI" id="CHEBI:29034"/>
    </reaction>
</comment>
<comment type="subunit">
    <text evidence="3">Homododecamer. The 12 subunits form a hollow sphere into which the mineral iron core of up to 110 Fe(3+) can be deposited.</text>
</comment>
<comment type="subcellular location">
    <subcellularLocation>
        <location evidence="1">Cytoplasm</location>
    </subcellularLocation>
</comment>
<comment type="PTM">
    <text>The N-terminus is blocked.</text>
</comment>
<comment type="miscellaneous">
    <text>The dps dodecamer comprises iron-binding sites for iron translocation, oxidation and nucleation. Fe(2+) atoms are initially bound to the outer surface in proximity to the iron entry pore from which they are translocated toward the inter-subunit ferroxidase centers via two discrete steps. Iron oxidation proceeds by transient formation of tri-iron ferroxidase centers and Fe(3+) atoms move to two distinct iron nucleation centers where iron mineralization occurs.</text>
</comment>
<comment type="similarity">
    <text evidence="4">Belongs to the Dps family.</text>
</comment>
<feature type="chain" id="PRO_0000201656" description="DNA protection during starvation protein">
    <location>
        <begin position="1"/>
        <end position="182"/>
    </location>
</feature>
<feature type="binding site" evidence="3">
    <location>
        <position position="52"/>
    </location>
    <ligand>
        <name>Fe cation</name>
        <dbReference type="ChEBI" id="CHEBI:24875"/>
        <label>1</label>
        <note>ligand shared between two dodecameric partners</note>
    </ligand>
</feature>
<feature type="binding site" description="in other chain" evidence="3">
    <location>
        <position position="79"/>
    </location>
    <ligand>
        <name>Fe cation</name>
        <dbReference type="ChEBI" id="CHEBI:24875"/>
        <label>1</label>
        <note>ligand shared between two dodecameric partners</note>
    </ligand>
</feature>
<feature type="binding site" description="in other chain" evidence="3">
    <location>
        <position position="83"/>
    </location>
    <ligand>
        <name>Fe cation</name>
        <dbReference type="ChEBI" id="CHEBI:24875"/>
        <label>1</label>
        <note>ligand shared between two dodecameric partners</note>
    </ligand>
</feature>
<feature type="binding site" evidence="2">
    <location>
        <position position="83"/>
    </location>
    <ligand>
        <name>Fe cation</name>
        <dbReference type="ChEBI" id="CHEBI:24875"/>
        <label>2</label>
    </ligand>
</feature>
<feature type="site" description="Involved in iron translocation">
    <location>
        <position position="53"/>
    </location>
</feature>
<feature type="site" description="Involved in iron translocation">
    <location>
        <position position="56"/>
    </location>
</feature>
<feature type="site" description="Involved in iron nucleation">
    <location>
        <position position="75"/>
    </location>
</feature>
<feature type="site" description="Involved in iron translocation">
    <location>
        <position position="85"/>
    </location>
</feature>
<feature type="site" description="Involved in iron translocation">
    <location>
        <position position="86"/>
    </location>
</feature>
<feature type="site" description="Involved in iron nucleation">
    <location>
        <position position="154"/>
    </location>
</feature>
<feature type="site" description="Involved in iron translocation">
    <location>
        <position position="164"/>
    </location>
</feature>
<feature type="site" description="Involved in iron translocation">
    <location>
        <position position="168"/>
    </location>
</feature>
<feature type="site" description="Involved in iron translocation">
    <location>
        <position position="171"/>
    </location>
</feature>
<feature type="turn" evidence="5">
    <location>
        <begin position="18"/>
        <end position="21"/>
    </location>
</feature>
<feature type="helix" evidence="5">
    <location>
        <begin position="24"/>
        <end position="54"/>
    </location>
</feature>
<feature type="helix" evidence="5">
    <location>
        <begin position="60"/>
        <end position="87"/>
    </location>
</feature>
<feature type="helix" evidence="5">
    <location>
        <begin position="96"/>
        <end position="102"/>
    </location>
</feature>
<feature type="strand" evidence="5">
    <location>
        <begin position="110"/>
        <end position="112"/>
    </location>
</feature>
<feature type="helix" evidence="5">
    <location>
        <begin position="115"/>
        <end position="142"/>
    </location>
</feature>
<feature type="helix" evidence="5">
    <location>
        <begin position="146"/>
        <end position="169"/>
    </location>
</feature>
<feature type="turn" evidence="5">
    <location>
        <begin position="178"/>
        <end position="180"/>
    </location>
</feature>
<name>DPS_HALSA</name>
<keyword id="KW-0002">3D-structure</keyword>
<keyword id="KW-0963">Cytoplasm</keyword>
<keyword id="KW-0903">Direct protein sequencing</keyword>
<keyword id="KW-0408">Iron</keyword>
<keyword id="KW-0409">Iron storage</keyword>
<keyword id="KW-0479">Metal-binding</keyword>
<keyword id="KW-0560">Oxidoreductase</keyword>
<keyword id="KW-1185">Reference proteome</keyword>
<protein>
    <recommendedName>
        <fullName>DNA protection during starvation protein</fullName>
        <ecNumber>1.16.-.-</ecNumber>
    </recommendedName>
    <alternativeName>
        <fullName>Bacterioferritin DpsA</fullName>
    </alternativeName>
</protein>
<proteinExistence type="evidence at protein level"/>
<sequence length="182" mass="20100">MSTQKNARATAGEVEGSDALRMDADRAEQCVDALNADLANVYVLYHQLKKHHWNVEGAEFRDLHLFLGEAAETAEEVADELAERVQALGGVPHASPETLQAEASVDVEDEDVYDIRTSLANDMAIYGDIIEATREHTELAENLGDHATAHMLREGLIELEDDAHHIEHYLEDDTLVTQGALE</sequence>